<protein>
    <recommendedName>
        <fullName evidence="1">Probable GTP-binding protein EngB</fullName>
    </recommendedName>
</protein>
<dbReference type="EMBL" id="CP000261">
    <property type="protein sequence ID" value="ABF35816.1"/>
    <property type="molecule type" value="Genomic_DNA"/>
</dbReference>
<dbReference type="SMR" id="Q1JC92"/>
<dbReference type="KEGG" id="spj:MGAS2096_Spy0764"/>
<dbReference type="HOGENOM" id="CLU_033732_3_0_9"/>
<dbReference type="GO" id="GO:0005829">
    <property type="term" value="C:cytosol"/>
    <property type="evidence" value="ECO:0007669"/>
    <property type="project" value="TreeGrafter"/>
</dbReference>
<dbReference type="GO" id="GO:0005525">
    <property type="term" value="F:GTP binding"/>
    <property type="evidence" value="ECO:0007669"/>
    <property type="project" value="UniProtKB-UniRule"/>
</dbReference>
<dbReference type="GO" id="GO:0046872">
    <property type="term" value="F:metal ion binding"/>
    <property type="evidence" value="ECO:0007669"/>
    <property type="project" value="UniProtKB-KW"/>
</dbReference>
<dbReference type="GO" id="GO:0000917">
    <property type="term" value="P:division septum assembly"/>
    <property type="evidence" value="ECO:0007669"/>
    <property type="project" value="UniProtKB-KW"/>
</dbReference>
<dbReference type="CDD" id="cd01876">
    <property type="entry name" value="YihA_EngB"/>
    <property type="match status" value="1"/>
</dbReference>
<dbReference type="FunFam" id="3.40.50.300:FF:000098">
    <property type="entry name" value="Probable GTP-binding protein EngB"/>
    <property type="match status" value="1"/>
</dbReference>
<dbReference type="Gene3D" id="3.40.50.300">
    <property type="entry name" value="P-loop containing nucleotide triphosphate hydrolases"/>
    <property type="match status" value="1"/>
</dbReference>
<dbReference type="HAMAP" id="MF_00321">
    <property type="entry name" value="GTPase_EngB"/>
    <property type="match status" value="1"/>
</dbReference>
<dbReference type="InterPro" id="IPR030393">
    <property type="entry name" value="G_ENGB_dom"/>
</dbReference>
<dbReference type="InterPro" id="IPR006073">
    <property type="entry name" value="GTP-bd"/>
</dbReference>
<dbReference type="InterPro" id="IPR019987">
    <property type="entry name" value="GTP-bd_ribosome_bio_YsxC"/>
</dbReference>
<dbReference type="InterPro" id="IPR027417">
    <property type="entry name" value="P-loop_NTPase"/>
</dbReference>
<dbReference type="InterPro" id="IPR005225">
    <property type="entry name" value="Small_GTP-bd"/>
</dbReference>
<dbReference type="NCBIfam" id="TIGR03598">
    <property type="entry name" value="GTPase_YsxC"/>
    <property type="match status" value="1"/>
</dbReference>
<dbReference type="NCBIfam" id="TIGR00231">
    <property type="entry name" value="small_GTP"/>
    <property type="match status" value="1"/>
</dbReference>
<dbReference type="PANTHER" id="PTHR11649:SF13">
    <property type="entry name" value="ENGB-TYPE G DOMAIN-CONTAINING PROTEIN"/>
    <property type="match status" value="1"/>
</dbReference>
<dbReference type="PANTHER" id="PTHR11649">
    <property type="entry name" value="MSS1/TRME-RELATED GTP-BINDING PROTEIN"/>
    <property type="match status" value="1"/>
</dbReference>
<dbReference type="Pfam" id="PF01926">
    <property type="entry name" value="MMR_HSR1"/>
    <property type="match status" value="1"/>
</dbReference>
<dbReference type="SUPFAM" id="SSF52540">
    <property type="entry name" value="P-loop containing nucleoside triphosphate hydrolases"/>
    <property type="match status" value="1"/>
</dbReference>
<dbReference type="PROSITE" id="PS51706">
    <property type="entry name" value="G_ENGB"/>
    <property type="match status" value="1"/>
</dbReference>
<keyword id="KW-0131">Cell cycle</keyword>
<keyword id="KW-0132">Cell division</keyword>
<keyword id="KW-0342">GTP-binding</keyword>
<keyword id="KW-0460">Magnesium</keyword>
<keyword id="KW-0479">Metal-binding</keyword>
<keyword id="KW-0547">Nucleotide-binding</keyword>
<keyword id="KW-0717">Septation</keyword>
<accession>Q1JC92</accession>
<name>ENGB_STRPB</name>
<sequence>MAEEQVLNTHNASILLSAANKSHYPQDDLPEIALAGRSNVGKSSFINTILGRKNLARTSSKPGKTQLLNFFNIDDKLRFVDVPGYGYAKVSKSERAKWGKMIEEYLTTRDNLRAVVSLVDLRHAPSKEDIQMYDFLKYYDIPVIVVATKADKIPRGKWNKHESVVKKALNFDKSDTFIVFSSVERIGIDDSWDAILEQV</sequence>
<feature type="chain" id="PRO_0000266964" description="Probable GTP-binding protein EngB">
    <location>
        <begin position="1"/>
        <end position="199"/>
    </location>
</feature>
<feature type="domain" description="EngB-type G" evidence="1">
    <location>
        <begin position="28"/>
        <end position="199"/>
    </location>
</feature>
<feature type="binding site" evidence="1">
    <location>
        <begin position="36"/>
        <end position="43"/>
    </location>
    <ligand>
        <name>GTP</name>
        <dbReference type="ChEBI" id="CHEBI:37565"/>
    </ligand>
</feature>
<feature type="binding site" evidence="1">
    <location>
        <position position="43"/>
    </location>
    <ligand>
        <name>Mg(2+)</name>
        <dbReference type="ChEBI" id="CHEBI:18420"/>
    </ligand>
</feature>
<feature type="binding site" evidence="1">
    <location>
        <begin position="63"/>
        <end position="67"/>
    </location>
    <ligand>
        <name>GTP</name>
        <dbReference type="ChEBI" id="CHEBI:37565"/>
    </ligand>
</feature>
<feature type="binding site" evidence="1">
    <location>
        <position position="65"/>
    </location>
    <ligand>
        <name>Mg(2+)</name>
        <dbReference type="ChEBI" id="CHEBI:18420"/>
    </ligand>
</feature>
<feature type="binding site" evidence="1">
    <location>
        <begin position="81"/>
        <end position="84"/>
    </location>
    <ligand>
        <name>GTP</name>
        <dbReference type="ChEBI" id="CHEBI:37565"/>
    </ligand>
</feature>
<feature type="binding site" evidence="1">
    <location>
        <begin position="148"/>
        <end position="151"/>
    </location>
    <ligand>
        <name>GTP</name>
        <dbReference type="ChEBI" id="CHEBI:37565"/>
    </ligand>
</feature>
<feature type="binding site" evidence="1">
    <location>
        <begin position="180"/>
        <end position="182"/>
    </location>
    <ligand>
        <name>GTP</name>
        <dbReference type="ChEBI" id="CHEBI:37565"/>
    </ligand>
</feature>
<reference key="1">
    <citation type="journal article" date="2006" name="Proc. Natl. Acad. Sci. U.S.A.">
        <title>Molecular genetic anatomy of inter- and intraserotype variation in the human bacterial pathogen group A Streptococcus.</title>
        <authorList>
            <person name="Beres S.B."/>
            <person name="Richter E.W."/>
            <person name="Nagiec M.J."/>
            <person name="Sumby P."/>
            <person name="Porcella S.F."/>
            <person name="DeLeo F.R."/>
            <person name="Musser J.M."/>
        </authorList>
    </citation>
    <scope>NUCLEOTIDE SEQUENCE [LARGE SCALE GENOMIC DNA]</scope>
    <source>
        <strain>MGAS2096</strain>
    </source>
</reference>
<evidence type="ECO:0000255" key="1">
    <source>
        <dbReference type="HAMAP-Rule" id="MF_00321"/>
    </source>
</evidence>
<proteinExistence type="inferred from homology"/>
<organism>
    <name type="scientific">Streptococcus pyogenes serotype M12 (strain MGAS2096)</name>
    <dbReference type="NCBI Taxonomy" id="370553"/>
    <lineage>
        <taxon>Bacteria</taxon>
        <taxon>Bacillati</taxon>
        <taxon>Bacillota</taxon>
        <taxon>Bacilli</taxon>
        <taxon>Lactobacillales</taxon>
        <taxon>Streptococcaceae</taxon>
        <taxon>Streptococcus</taxon>
    </lineage>
</organism>
<comment type="function">
    <text evidence="1">Necessary for normal cell division and for the maintenance of normal septation.</text>
</comment>
<comment type="cofactor">
    <cofactor evidence="1">
        <name>Mg(2+)</name>
        <dbReference type="ChEBI" id="CHEBI:18420"/>
    </cofactor>
</comment>
<comment type="similarity">
    <text evidence="1">Belongs to the TRAFAC class TrmE-Era-EngA-EngB-Septin-like GTPase superfamily. EngB GTPase family.</text>
</comment>
<gene>
    <name evidence="1" type="primary">engB</name>
    <name type="ordered locus">MGAS2096_Spy0764</name>
</gene>